<keyword id="KW-0217">Developmental protein</keyword>
<keyword id="KW-0238">DNA-binding</keyword>
<keyword id="KW-0539">Nucleus</keyword>
<keyword id="KW-1185">Reference proteome</keyword>
<keyword id="KW-0879">Wnt signaling pathway</keyword>
<dbReference type="EMBL" id="CR760909">
    <property type="protein sequence ID" value="CAJ82282.1"/>
    <property type="molecule type" value="mRNA"/>
</dbReference>
<dbReference type="EMBL" id="BC090595">
    <property type="protein sequence ID" value="AAH90595.1"/>
    <property type="molecule type" value="mRNA"/>
</dbReference>
<dbReference type="RefSeq" id="NP_001025555.1">
    <property type="nucleotide sequence ID" value="NM_001030384.1"/>
</dbReference>
<dbReference type="RefSeq" id="XP_012816665.1">
    <property type="nucleotide sequence ID" value="XM_012961211.2"/>
</dbReference>
<dbReference type="SMR" id="Q5BL56"/>
<dbReference type="FunCoup" id="Q5BL56">
    <property type="interactions" value="1303"/>
</dbReference>
<dbReference type="STRING" id="8364.ENSXETP00000040194"/>
<dbReference type="PaxDb" id="8364-ENSXETP00000013886"/>
<dbReference type="DNASU" id="594948"/>
<dbReference type="GeneID" id="594948"/>
<dbReference type="KEGG" id="xtr:594948"/>
<dbReference type="AGR" id="Xenbase:XB-GENE-951781"/>
<dbReference type="CTD" id="10042"/>
<dbReference type="Xenbase" id="XB-GENE-951781">
    <property type="gene designation" value="hmgxb4"/>
</dbReference>
<dbReference type="eggNOG" id="ENOG502QSH9">
    <property type="taxonomic scope" value="Eukaryota"/>
</dbReference>
<dbReference type="InParanoid" id="Q5BL56"/>
<dbReference type="OrthoDB" id="4777606at2759"/>
<dbReference type="Proteomes" id="UP000008143">
    <property type="component" value="Chromosome 4"/>
</dbReference>
<dbReference type="Bgee" id="ENSXETG00000006340">
    <property type="expression patterns" value="Expressed in 4-cell stage embryo and 12 other cell types or tissues"/>
</dbReference>
<dbReference type="ExpressionAtlas" id="Q5BL56">
    <property type="expression patterns" value="baseline"/>
</dbReference>
<dbReference type="GO" id="GO:0005634">
    <property type="term" value="C:nucleus"/>
    <property type="evidence" value="ECO:0007669"/>
    <property type="project" value="UniProtKB-SubCell"/>
</dbReference>
<dbReference type="GO" id="GO:0003677">
    <property type="term" value="F:DNA binding"/>
    <property type="evidence" value="ECO:0007669"/>
    <property type="project" value="UniProtKB-KW"/>
</dbReference>
<dbReference type="GO" id="GO:0019901">
    <property type="term" value="F:protein kinase binding"/>
    <property type="evidence" value="ECO:0000250"/>
    <property type="project" value="UniProtKB"/>
</dbReference>
<dbReference type="GO" id="GO:0030178">
    <property type="term" value="P:negative regulation of Wnt signaling pathway"/>
    <property type="evidence" value="ECO:0000250"/>
    <property type="project" value="UniProtKB"/>
</dbReference>
<dbReference type="GO" id="GO:0016055">
    <property type="term" value="P:Wnt signaling pathway"/>
    <property type="evidence" value="ECO:0007669"/>
    <property type="project" value="UniProtKB-KW"/>
</dbReference>
<dbReference type="CDD" id="cd21982">
    <property type="entry name" value="HMG-box_HMGXB4"/>
    <property type="match status" value="1"/>
</dbReference>
<dbReference type="FunFam" id="1.10.30.10:FF:000030">
    <property type="entry name" value="HMG domain-containing protein 4 isoform X1"/>
    <property type="match status" value="1"/>
</dbReference>
<dbReference type="Gene3D" id="1.10.30.10">
    <property type="entry name" value="High mobility group box domain"/>
    <property type="match status" value="1"/>
</dbReference>
<dbReference type="InterPro" id="IPR025228">
    <property type="entry name" value="DUF4171"/>
</dbReference>
<dbReference type="InterPro" id="IPR009071">
    <property type="entry name" value="HMG_box_dom"/>
</dbReference>
<dbReference type="InterPro" id="IPR036910">
    <property type="entry name" value="HMG_box_dom_sf"/>
</dbReference>
<dbReference type="InterPro" id="IPR042477">
    <property type="entry name" value="HMGXB4"/>
</dbReference>
<dbReference type="InterPro" id="IPR048016">
    <property type="entry name" value="HMGXB4_HMG-box"/>
</dbReference>
<dbReference type="PANTHER" id="PTHR46584">
    <property type="entry name" value="HMG DOMAIN-CONTAINING PROTEIN 4"/>
    <property type="match status" value="1"/>
</dbReference>
<dbReference type="PANTHER" id="PTHR46584:SF1">
    <property type="entry name" value="HMG DOMAIN-CONTAINING PROTEIN 4"/>
    <property type="match status" value="1"/>
</dbReference>
<dbReference type="Pfam" id="PF13775">
    <property type="entry name" value="DUF4171"/>
    <property type="match status" value="1"/>
</dbReference>
<dbReference type="Pfam" id="PF00505">
    <property type="entry name" value="HMG_box"/>
    <property type="match status" value="1"/>
</dbReference>
<dbReference type="PRINTS" id="PR00886">
    <property type="entry name" value="HIGHMOBLTY12"/>
</dbReference>
<dbReference type="SMART" id="SM00398">
    <property type="entry name" value="HMG"/>
    <property type="match status" value="1"/>
</dbReference>
<dbReference type="SUPFAM" id="SSF47095">
    <property type="entry name" value="HMG-box"/>
    <property type="match status" value="1"/>
</dbReference>
<dbReference type="PROSITE" id="PS50118">
    <property type="entry name" value="HMG_BOX_2"/>
    <property type="match status" value="1"/>
</dbReference>
<reference evidence="5" key="1">
    <citation type="submission" date="2006-10" db="EMBL/GenBank/DDBJ databases">
        <authorList>
            <consortium name="Sanger Xenopus tropicalis EST/cDNA project"/>
        </authorList>
    </citation>
    <scope>NUCLEOTIDE SEQUENCE [LARGE SCALE MRNA]</scope>
    <source>
        <tissue evidence="5">Egg</tissue>
    </source>
</reference>
<reference evidence="5" key="2">
    <citation type="submission" date="2005-02" db="EMBL/GenBank/DDBJ databases">
        <authorList>
            <consortium name="NIH - Xenopus Gene Collection (XGC) project"/>
        </authorList>
    </citation>
    <scope>NUCLEOTIDE SEQUENCE [LARGE SCALE MRNA]</scope>
    <source>
        <tissue evidence="4">Tail bud</tissue>
    </source>
</reference>
<evidence type="ECO:0000250" key="1">
    <source>
        <dbReference type="UniProtKB" id="Q6WKW9"/>
    </source>
</evidence>
<evidence type="ECO:0000255" key="2">
    <source>
        <dbReference type="PROSITE-ProRule" id="PRU00267"/>
    </source>
</evidence>
<evidence type="ECO:0000256" key="3">
    <source>
        <dbReference type="SAM" id="MobiDB-lite"/>
    </source>
</evidence>
<evidence type="ECO:0000312" key="4">
    <source>
        <dbReference type="EMBL" id="AAH90595.1"/>
    </source>
</evidence>
<evidence type="ECO:0000312" key="5">
    <source>
        <dbReference type="EMBL" id="CAJ82282.1"/>
    </source>
</evidence>
<sequence>MSFRDLRECIDSERGMEDVGLAAGRSQREKKRSYKDLLREEEEIAEQVRKSSKKRSRELDLFLASESHKKKKKHLTDDYHADTPSPDLAKKKKKALLPSPAPPSSSDTAMDLLKAITSPQVDTSTTHLPKKPEKILATPVNFSSPSQSSHKEHHKKIGEVSGDDSSHRSKKSKPLTLREPDGLRMKLILSPNEKSEEESASPQGGPGHSEGASSKKTSKKTGREETESRSSHKKHKKESHTPRSGGTPDSASSTGGELEAGELIIDDSFHEMKKKKKSKKSKKKKDKHKDEKHRKHSKSKREHEGEERPTQIASPVLPSPPPPTATTPTSPPSVPPQALITHAEEQLDKKKKKEDPEKPKKKNMSAYQVFSKEYRGSIIAEHPGIDFGELSKKLAEVWKQLPEKDKLAWKQKAQYLQHKQNKAEATTVKRKSSSSESAARSKGSSSGLPSPNKKSPTSVVSFSTSPAKVPDTEPIDVAAHLQLLGESLSLIGHRLQETEGMVAVSGSLSVLLDSILCALGPLVCLTSHVPQLNACPKQILSNTLDNIAYVMPGL</sequence>
<protein>
    <recommendedName>
        <fullName>HMG box-containing protein 4</fullName>
    </recommendedName>
    <alternativeName>
        <fullName>High mobility group protein 2-like 1</fullName>
    </alternativeName>
</protein>
<comment type="function">
    <text evidence="1">Negatively regulates Wnt/beta-catenin signaling during development.</text>
</comment>
<comment type="subunit">
    <text evidence="1">Interacts with nlk.2.</text>
</comment>
<comment type="subcellular location">
    <subcellularLocation>
        <location evidence="2">Nucleus</location>
    </subcellularLocation>
</comment>
<proteinExistence type="evidence at transcript level"/>
<feature type="chain" id="PRO_0000370234" description="HMG box-containing protein 4">
    <location>
        <begin position="1"/>
        <end position="554"/>
    </location>
</feature>
<feature type="DNA-binding region" description="HMG box" evidence="2">
    <location>
        <begin position="360"/>
        <end position="428"/>
    </location>
</feature>
<feature type="region of interest" description="Disordered" evidence="3">
    <location>
        <begin position="14"/>
        <end position="34"/>
    </location>
</feature>
<feature type="region of interest" description="Disordered" evidence="3">
    <location>
        <begin position="47"/>
        <end position="368"/>
    </location>
</feature>
<feature type="region of interest" description="Disordered" evidence="3">
    <location>
        <begin position="418"/>
        <end position="468"/>
    </location>
</feature>
<feature type="compositionally biased region" description="Polar residues" evidence="3">
    <location>
        <begin position="117"/>
        <end position="127"/>
    </location>
</feature>
<feature type="compositionally biased region" description="Basic and acidic residues" evidence="3">
    <location>
        <begin position="221"/>
        <end position="230"/>
    </location>
</feature>
<feature type="compositionally biased region" description="Polar residues" evidence="3">
    <location>
        <begin position="242"/>
        <end position="255"/>
    </location>
</feature>
<feature type="compositionally biased region" description="Basic residues" evidence="3">
    <location>
        <begin position="272"/>
        <end position="300"/>
    </location>
</feature>
<feature type="compositionally biased region" description="Pro residues" evidence="3">
    <location>
        <begin position="317"/>
        <end position="335"/>
    </location>
</feature>
<feature type="compositionally biased region" description="Basic and acidic residues" evidence="3">
    <location>
        <begin position="342"/>
        <end position="358"/>
    </location>
</feature>
<feature type="compositionally biased region" description="Low complexity" evidence="3">
    <location>
        <begin position="434"/>
        <end position="466"/>
    </location>
</feature>
<organism>
    <name type="scientific">Xenopus tropicalis</name>
    <name type="common">Western clawed frog</name>
    <name type="synonym">Silurana tropicalis</name>
    <dbReference type="NCBI Taxonomy" id="8364"/>
    <lineage>
        <taxon>Eukaryota</taxon>
        <taxon>Metazoa</taxon>
        <taxon>Chordata</taxon>
        <taxon>Craniata</taxon>
        <taxon>Vertebrata</taxon>
        <taxon>Euteleostomi</taxon>
        <taxon>Amphibia</taxon>
        <taxon>Batrachia</taxon>
        <taxon>Anura</taxon>
        <taxon>Pipoidea</taxon>
        <taxon>Pipidae</taxon>
        <taxon>Xenopodinae</taxon>
        <taxon>Xenopus</taxon>
        <taxon>Silurana</taxon>
    </lineage>
</organism>
<name>HMGX4_XENTR</name>
<accession>Q5BL56</accession>
<gene>
    <name type="primary">hmgxb4</name>
    <name evidence="5" type="synonym">hmg2l1</name>
    <name evidence="4" type="synonym">hmgb2l1</name>
    <name type="ORF">TEgg141c05.1</name>
</gene>